<name>PORTL_BPPHE</name>
<feature type="chain" id="PRO_0000432537" description="Probable portal protein">
    <location>
        <begin position="1"/>
        <end position="574"/>
    </location>
</feature>
<feature type="region of interest" description="Disordered" evidence="2">
    <location>
        <begin position="504"/>
        <end position="574"/>
    </location>
</feature>
<feature type="compositionally biased region" description="Polar residues" evidence="2">
    <location>
        <begin position="522"/>
        <end position="535"/>
    </location>
</feature>
<feature type="compositionally biased region" description="Basic and acidic residues" evidence="2">
    <location>
        <begin position="543"/>
        <end position="559"/>
    </location>
</feature>
<evidence type="ECO:0000250" key="1">
    <source>
        <dbReference type="UniProtKB" id="P25480"/>
    </source>
</evidence>
<evidence type="ECO:0000256" key="2">
    <source>
        <dbReference type="SAM" id="MobiDB-lite"/>
    </source>
</evidence>
<evidence type="ECO:0000305" key="3"/>
<evidence type="ECO:0000312" key="4">
    <source>
        <dbReference type="EMBL" id="BAF81280.1"/>
    </source>
</evidence>
<evidence type="ECO:0000312" key="5">
    <source>
        <dbReference type="Proteomes" id="UP000001151"/>
    </source>
</evidence>
<organismHost>
    <name type="scientific">Enterococcus faecalis</name>
    <name type="common">Streptococcus faecalis</name>
    <dbReference type="NCBI Taxonomy" id="1351"/>
</organismHost>
<gene>
    <name evidence="4" type="ORF">EFP_012</name>
</gene>
<accession>A8E264</accession>
<keyword id="KW-0167">Capsid protein</keyword>
<keyword id="KW-0238">DNA-binding</keyword>
<keyword id="KW-1185">Reference proteome</keyword>
<keyword id="KW-0118">Viral capsid assembly</keyword>
<keyword id="KW-1242">Viral contractile tail ejection system</keyword>
<keyword id="KW-1171">Viral genome ejection through host cell envelope</keyword>
<keyword id="KW-0231">Viral genome packaging</keyword>
<keyword id="KW-1162">Viral penetration into host cytoplasm</keyword>
<keyword id="KW-1188">Viral release from host cell</keyword>
<keyword id="KW-0946">Virion</keyword>
<keyword id="KW-1160">Virus entry into host cell</keyword>
<proteinExistence type="inferred from homology"/>
<sequence length="574" mass="64932">MPKWLDKALGIEKSSIEETRNMENYKMHLREIDTNVVNNEPYSMESIEKGMNGKTTAYMQPIIGEMSVNPGYKTKPSIRNSQDLHKTLKKFGNNIILNAIINTRSNQVSMYCKPARNSETGVGYEIRLKDIEAEPTSHDIANIKRIESFLENTAQFRDPNRDNFTTFCKKLVRATYMYDQVNFEKVFDKDGNFIKFDTVDPTTIFLATNGEGKLIKNGERFVQVIDNRIVAKFNERELAFAVRNPRADIEVGQYGYPELEIALKQFIAHENTEVFNDRFFSHGGTTRGILHVKTGQQQSQQALDIFRREWRSSLAGINGSWQIPVVSAEDVKFVNMTPSANDMQFEKWLNYLINVISALYGIDPAEINFPNNGGATGSKGGSLNEGNSKEKMQASQNKGLQPLLRFIEDTVNTYIVAEFGEKYQFQFRGGDLSAQLDKLKIIEQEGKVFRTVNEIRHDKGLEPIKGGDVILNGVHIQAIGQALQEEQLEYQRSQDRLNRLLELSGGDVEQPEPEEPKDSQNDTDVSFQDEQQGLNGKSKKVNGKVDDNVGKDGQLKSEENTNSTKHGTDGIKKE</sequence>
<reference key="1">
    <citation type="journal article" date="2008" name="Appl. Environ. Microbiol.">
        <title>In silico and in vivo evaluation of bacteriophage phiEF24C, a candidate for treatment of Enterococcus faecalis infections.</title>
        <authorList>
            <person name="Uchiyama J."/>
            <person name="Rashel M."/>
            <person name="Takemura I."/>
            <person name="Wakiguchi H."/>
            <person name="Matsuzaki S."/>
        </authorList>
    </citation>
    <scope>NUCLEOTIDE SEQUENCE [GENOMIC DNA]</scope>
    <source>
        <strain evidence="4">PhiEF24C</strain>
    </source>
</reference>
<organism evidence="5">
    <name type="scientific">Enterococcus phage phiEF24C</name>
    <name type="common">Enterococcus bacteriophage phi-EF24C</name>
    <dbReference type="NCBI Taxonomy" id="442493"/>
    <lineage>
        <taxon>Viruses</taxon>
        <taxon>Duplodnaviria</taxon>
        <taxon>Heunggongvirae</taxon>
        <taxon>Uroviricota</taxon>
        <taxon>Caudoviricetes</taxon>
        <taxon>Herelleviridae</taxon>
        <taxon>Brockvirinae</taxon>
        <taxon>Kochikohdavirus</taxon>
        <taxon>Kochikohdavirus EF24C</taxon>
    </lineage>
</organism>
<comment type="function">
    <text evidence="1">Forms the portal vertex of the capsid. This portal plays critical roles in head assembly, genome packaging, neck/tail attachment, and genome ejection. The portal protein multimerizes as a single ring-shaped homododecamer arranged around a central channel. Binds to the terminase subunits to form the packaging machine.</text>
</comment>
<comment type="subunit">
    <text evidence="1">Homododecamer.</text>
</comment>
<comment type="subcellular location">
    <subcellularLocation>
        <location evidence="1">Virion</location>
    </subcellularLocation>
</comment>
<comment type="similarity">
    <text evidence="3">Belongs to the phage portal family.</text>
</comment>
<protein>
    <recommendedName>
        <fullName>Probable portal protein</fullName>
    </recommendedName>
</protein>
<dbReference type="EMBL" id="AP009390">
    <property type="protein sequence ID" value="BAF81280.1"/>
    <property type="molecule type" value="Genomic_DNA"/>
</dbReference>
<dbReference type="RefSeq" id="YP_001504121.1">
    <property type="nucleotide sequence ID" value="NC_009904.1"/>
</dbReference>
<dbReference type="SMR" id="A8E264"/>
<dbReference type="KEGG" id="vg:5666445"/>
<dbReference type="OrthoDB" id="4451at10239"/>
<dbReference type="Proteomes" id="UP000001151">
    <property type="component" value="Genome"/>
</dbReference>
<dbReference type="GO" id="GO:0019028">
    <property type="term" value="C:viral capsid"/>
    <property type="evidence" value="ECO:0007669"/>
    <property type="project" value="UniProtKB-KW"/>
</dbReference>
<dbReference type="GO" id="GO:0003677">
    <property type="term" value="F:DNA binding"/>
    <property type="evidence" value="ECO:0007669"/>
    <property type="project" value="UniProtKB-KW"/>
</dbReference>
<dbReference type="GO" id="GO:0099000">
    <property type="term" value="P:symbiont genome ejection through host cell envelope, contractile tail mechanism"/>
    <property type="evidence" value="ECO:0007669"/>
    <property type="project" value="UniProtKB-KW"/>
</dbReference>
<dbReference type="InterPro" id="IPR006944">
    <property type="entry name" value="Phage/GTA_portal"/>
</dbReference>
<dbReference type="Pfam" id="PF04860">
    <property type="entry name" value="Phage_portal"/>
    <property type="match status" value="1"/>
</dbReference>